<gene>
    <name evidence="1" type="primary">groEL1</name>
    <name evidence="1" type="synonym">groL1</name>
    <name type="ordered locus">Caur_2736</name>
</gene>
<name>CH601_CHLAA</name>
<reference key="1">
    <citation type="journal article" date="2011" name="BMC Genomics">
        <title>Complete genome sequence of the filamentous anoxygenic phototrophic bacterium Chloroflexus aurantiacus.</title>
        <authorList>
            <person name="Tang K.H."/>
            <person name="Barry K."/>
            <person name="Chertkov O."/>
            <person name="Dalin E."/>
            <person name="Han C.S."/>
            <person name="Hauser L.J."/>
            <person name="Honchak B.M."/>
            <person name="Karbach L.E."/>
            <person name="Land M.L."/>
            <person name="Lapidus A."/>
            <person name="Larimer F.W."/>
            <person name="Mikhailova N."/>
            <person name="Pitluck S."/>
            <person name="Pierson B.K."/>
            <person name="Blankenship R.E."/>
        </authorList>
    </citation>
    <scope>NUCLEOTIDE SEQUENCE [LARGE SCALE GENOMIC DNA]</scope>
    <source>
        <strain>ATCC 29366 / DSM 635 / J-10-fl</strain>
    </source>
</reference>
<comment type="function">
    <text evidence="1">Together with its co-chaperonin GroES, plays an essential role in assisting protein folding. The GroEL-GroES system forms a nano-cage that allows encapsulation of the non-native substrate proteins and provides a physical environment optimized to promote and accelerate protein folding.</text>
</comment>
<comment type="catalytic activity">
    <reaction evidence="1">
        <text>ATP + H2O + a folded polypeptide = ADP + phosphate + an unfolded polypeptide.</text>
        <dbReference type="EC" id="5.6.1.7"/>
    </reaction>
</comment>
<comment type="subunit">
    <text evidence="1">Forms a cylinder of 14 subunits composed of two heptameric rings stacked back-to-back. Interacts with the co-chaperonin GroES.</text>
</comment>
<comment type="subcellular location">
    <subcellularLocation>
        <location evidence="1">Cytoplasm</location>
    </subcellularLocation>
</comment>
<comment type="similarity">
    <text evidence="1">Belongs to the chaperonin (HSP60) family.</text>
</comment>
<accession>A9WJN7</accession>
<organism>
    <name type="scientific">Chloroflexus aurantiacus (strain ATCC 29366 / DSM 635 / J-10-fl)</name>
    <dbReference type="NCBI Taxonomy" id="324602"/>
    <lineage>
        <taxon>Bacteria</taxon>
        <taxon>Bacillati</taxon>
        <taxon>Chloroflexota</taxon>
        <taxon>Chloroflexia</taxon>
        <taxon>Chloroflexales</taxon>
        <taxon>Chloroflexineae</taxon>
        <taxon>Chloroflexaceae</taxon>
        <taxon>Chloroflexus</taxon>
    </lineage>
</organism>
<dbReference type="EC" id="5.6.1.7" evidence="1"/>
<dbReference type="EMBL" id="CP000909">
    <property type="protein sequence ID" value="ABY35941.1"/>
    <property type="molecule type" value="Genomic_DNA"/>
</dbReference>
<dbReference type="RefSeq" id="YP_001636330.1">
    <property type="nucleotide sequence ID" value="NC_010175.1"/>
</dbReference>
<dbReference type="SMR" id="A9WJN7"/>
<dbReference type="FunCoup" id="A9WJN7">
    <property type="interactions" value="486"/>
</dbReference>
<dbReference type="STRING" id="324602.Caur_2736"/>
<dbReference type="EnsemblBacteria" id="ABY35941">
    <property type="protein sequence ID" value="ABY35941"/>
    <property type="gene ID" value="Caur_2736"/>
</dbReference>
<dbReference type="KEGG" id="cau:Caur_2736"/>
<dbReference type="PATRIC" id="fig|324602.8.peg.3087"/>
<dbReference type="eggNOG" id="COG0459">
    <property type="taxonomic scope" value="Bacteria"/>
</dbReference>
<dbReference type="HOGENOM" id="CLU_016503_3_0_0"/>
<dbReference type="InParanoid" id="A9WJN7"/>
<dbReference type="Proteomes" id="UP000002008">
    <property type="component" value="Chromosome"/>
</dbReference>
<dbReference type="GO" id="GO:1990220">
    <property type="term" value="C:GroEL-GroES complex"/>
    <property type="evidence" value="ECO:0000318"/>
    <property type="project" value="GO_Central"/>
</dbReference>
<dbReference type="GO" id="GO:0005524">
    <property type="term" value="F:ATP binding"/>
    <property type="evidence" value="ECO:0000318"/>
    <property type="project" value="GO_Central"/>
</dbReference>
<dbReference type="GO" id="GO:0140662">
    <property type="term" value="F:ATP-dependent protein folding chaperone"/>
    <property type="evidence" value="ECO:0007669"/>
    <property type="project" value="InterPro"/>
</dbReference>
<dbReference type="GO" id="GO:0016853">
    <property type="term" value="F:isomerase activity"/>
    <property type="evidence" value="ECO:0007669"/>
    <property type="project" value="UniProtKB-KW"/>
</dbReference>
<dbReference type="GO" id="GO:0051082">
    <property type="term" value="F:unfolded protein binding"/>
    <property type="evidence" value="ECO:0000318"/>
    <property type="project" value="GO_Central"/>
</dbReference>
<dbReference type="GO" id="GO:0051085">
    <property type="term" value="P:chaperone cofactor-dependent protein refolding"/>
    <property type="evidence" value="ECO:0000318"/>
    <property type="project" value="GO_Central"/>
</dbReference>
<dbReference type="GO" id="GO:0042026">
    <property type="term" value="P:protein refolding"/>
    <property type="evidence" value="ECO:0007669"/>
    <property type="project" value="UniProtKB-UniRule"/>
</dbReference>
<dbReference type="GO" id="GO:0009408">
    <property type="term" value="P:response to heat"/>
    <property type="evidence" value="ECO:0000318"/>
    <property type="project" value="GO_Central"/>
</dbReference>
<dbReference type="CDD" id="cd03344">
    <property type="entry name" value="GroEL"/>
    <property type="match status" value="1"/>
</dbReference>
<dbReference type="FunFam" id="3.50.7.10:FF:000001">
    <property type="entry name" value="60 kDa chaperonin"/>
    <property type="match status" value="1"/>
</dbReference>
<dbReference type="Gene3D" id="3.50.7.10">
    <property type="entry name" value="GroEL"/>
    <property type="match status" value="1"/>
</dbReference>
<dbReference type="Gene3D" id="1.10.560.10">
    <property type="entry name" value="GroEL-like equatorial domain"/>
    <property type="match status" value="1"/>
</dbReference>
<dbReference type="Gene3D" id="3.30.260.10">
    <property type="entry name" value="TCP-1-like chaperonin intermediate domain"/>
    <property type="match status" value="1"/>
</dbReference>
<dbReference type="HAMAP" id="MF_00600">
    <property type="entry name" value="CH60"/>
    <property type="match status" value="1"/>
</dbReference>
<dbReference type="InterPro" id="IPR018370">
    <property type="entry name" value="Chaperonin_Cpn60_CS"/>
</dbReference>
<dbReference type="InterPro" id="IPR001844">
    <property type="entry name" value="Cpn60/GroEL"/>
</dbReference>
<dbReference type="InterPro" id="IPR002423">
    <property type="entry name" value="Cpn60/GroEL/TCP-1"/>
</dbReference>
<dbReference type="InterPro" id="IPR027409">
    <property type="entry name" value="GroEL-like_apical_dom_sf"/>
</dbReference>
<dbReference type="InterPro" id="IPR027413">
    <property type="entry name" value="GROEL-like_equatorial_sf"/>
</dbReference>
<dbReference type="InterPro" id="IPR027410">
    <property type="entry name" value="TCP-1-like_intermed_sf"/>
</dbReference>
<dbReference type="NCBIfam" id="TIGR02348">
    <property type="entry name" value="GroEL"/>
    <property type="match status" value="1"/>
</dbReference>
<dbReference type="NCBIfam" id="NF000592">
    <property type="entry name" value="PRK00013.1"/>
    <property type="match status" value="1"/>
</dbReference>
<dbReference type="NCBIfam" id="NF009487">
    <property type="entry name" value="PRK12849.1"/>
    <property type="match status" value="1"/>
</dbReference>
<dbReference type="NCBIfam" id="NF009488">
    <property type="entry name" value="PRK12850.1"/>
    <property type="match status" value="1"/>
</dbReference>
<dbReference type="NCBIfam" id="NF009489">
    <property type="entry name" value="PRK12851.1"/>
    <property type="match status" value="1"/>
</dbReference>
<dbReference type="PANTHER" id="PTHR45633">
    <property type="entry name" value="60 KDA HEAT SHOCK PROTEIN, MITOCHONDRIAL"/>
    <property type="match status" value="1"/>
</dbReference>
<dbReference type="Pfam" id="PF00118">
    <property type="entry name" value="Cpn60_TCP1"/>
    <property type="match status" value="1"/>
</dbReference>
<dbReference type="PRINTS" id="PR00298">
    <property type="entry name" value="CHAPERONIN60"/>
</dbReference>
<dbReference type="SUPFAM" id="SSF52029">
    <property type="entry name" value="GroEL apical domain-like"/>
    <property type="match status" value="1"/>
</dbReference>
<dbReference type="SUPFAM" id="SSF48592">
    <property type="entry name" value="GroEL equatorial domain-like"/>
    <property type="match status" value="1"/>
</dbReference>
<dbReference type="SUPFAM" id="SSF54849">
    <property type="entry name" value="GroEL-intermediate domain like"/>
    <property type="match status" value="1"/>
</dbReference>
<dbReference type="PROSITE" id="PS00296">
    <property type="entry name" value="CHAPERONINS_CPN60"/>
    <property type="match status" value="1"/>
</dbReference>
<keyword id="KW-0067">ATP-binding</keyword>
<keyword id="KW-0143">Chaperone</keyword>
<keyword id="KW-0963">Cytoplasm</keyword>
<keyword id="KW-0413">Isomerase</keyword>
<keyword id="KW-0547">Nucleotide-binding</keyword>
<keyword id="KW-1185">Reference proteome</keyword>
<feature type="chain" id="PRO_0000331993" description="Chaperonin GroEL 1">
    <location>
        <begin position="1"/>
        <end position="544"/>
    </location>
</feature>
<feature type="binding site" evidence="1">
    <location>
        <begin position="29"/>
        <end position="32"/>
    </location>
    <ligand>
        <name>ATP</name>
        <dbReference type="ChEBI" id="CHEBI:30616"/>
    </ligand>
</feature>
<feature type="binding site" evidence="1">
    <location>
        <begin position="86"/>
        <end position="90"/>
    </location>
    <ligand>
        <name>ATP</name>
        <dbReference type="ChEBI" id="CHEBI:30616"/>
    </ligand>
</feature>
<feature type="binding site" evidence="1">
    <location>
        <position position="413"/>
    </location>
    <ligand>
        <name>ATP</name>
        <dbReference type="ChEBI" id="CHEBI:30616"/>
    </ligand>
</feature>
<feature type="binding site" evidence="1">
    <location>
        <begin position="482"/>
        <end position="484"/>
    </location>
    <ligand>
        <name>ATP</name>
        <dbReference type="ChEBI" id="CHEBI:30616"/>
    </ligand>
</feature>
<feature type="binding site" evidence="1">
    <location>
        <position position="498"/>
    </location>
    <ligand>
        <name>ATP</name>
        <dbReference type="ChEBI" id="CHEBI:30616"/>
    </ligand>
</feature>
<sequence length="544" mass="58020">MPKQLYFNEEARRALKRGVDLVADAVKTTLGPRGRNVAIDKKFGSPTVTHDGVTVAKEIELKDPFENMGAQLLKEAATKTNDVAGDGTTTATVLAQAIVTEGLKVVAAGANAMLLKRGLDRGAEALVAAIKASAVPVRDRADIAHVATNSAADSEIGELIAEVMEKVGKDGVITVEESKGVTFEKEYTEGMQFDRGYISGYMVTNVERQEAELDEPYILITDKKISSIQEILPVLEKVLQVTKNFVIIAEDVDGEALATLVVNKLRGTINALAVKAPGFGDRRKAMLQDIAILTGGTVISEEIGRKLDSATIEDLGRARKVIATKDDTTIIEGRGDEAAIRARIEQIRAQIATTTSDFDREKLQERLAKLAGGVAVIKVGAATEPELKEKKHRVEDALSATRAAVEEGIVPGGGVALINAIPALDNVQVAHEDEKVGLQILRRALEEPLRILARNAGEDGSVIIANVRRLQEEKGDKTIGYNVLTGQYGSMIEQGIIDPVKVTRSAVQNAVSIAGMILTTEALITDIPEDKPAATPGAGGGMDF</sequence>
<protein>
    <recommendedName>
        <fullName evidence="1">Chaperonin GroEL 1</fullName>
        <ecNumber evidence="1">5.6.1.7</ecNumber>
    </recommendedName>
    <alternativeName>
        <fullName evidence="1">60 kDa chaperonin 1</fullName>
    </alternativeName>
    <alternativeName>
        <fullName evidence="1">Chaperonin-60 1</fullName>
        <shortName evidence="1">Cpn60 1</shortName>
    </alternativeName>
</protein>
<evidence type="ECO:0000255" key="1">
    <source>
        <dbReference type="HAMAP-Rule" id="MF_00600"/>
    </source>
</evidence>
<proteinExistence type="inferred from homology"/>